<feature type="chain" id="PRO_0000368629" description="ATP synthase subunit b">
    <location>
        <begin position="1"/>
        <end position="157"/>
    </location>
</feature>
<feature type="transmembrane region" description="Helical" evidence="1">
    <location>
        <begin position="7"/>
        <end position="29"/>
    </location>
</feature>
<sequence length="157" mass="17469">MNINFTLISQAIAFSLFILFTARFVWPYLLRAIEERQQKIADGLAAGERGKKELELASQRSSEVLKEAKQRASEIVIQAEKRASDIIEEAKQNARIEGEKIIAGAKAEIQHETFSARESLRQQVAGLAVQGASKILRREVNAKVHADLLASIEAELK</sequence>
<evidence type="ECO:0000255" key="1">
    <source>
        <dbReference type="HAMAP-Rule" id="MF_01398"/>
    </source>
</evidence>
<accession>Q82XQ2</accession>
<comment type="function">
    <text evidence="1">F(1)F(0) ATP synthase produces ATP from ADP in the presence of a proton or sodium gradient. F-type ATPases consist of two structural domains, F(1) containing the extramembraneous catalytic core and F(0) containing the membrane proton channel, linked together by a central stalk and a peripheral stalk. During catalysis, ATP synthesis in the catalytic domain of F(1) is coupled via a rotary mechanism of the central stalk subunits to proton translocation.</text>
</comment>
<comment type="function">
    <text evidence="1">Component of the F(0) channel, it forms part of the peripheral stalk, linking F(1) to F(0).</text>
</comment>
<comment type="subunit">
    <text evidence="1">F-type ATPases have 2 components, F(1) - the catalytic core - and F(0) - the membrane proton channel. F(1) has five subunits: alpha(3), beta(3), gamma(1), delta(1), epsilon(1). F(0) has three main subunits: a(1), b(2) and c(10-14). The alpha and beta chains form an alternating ring which encloses part of the gamma chain. F(1) is attached to F(0) by a central stalk formed by the gamma and epsilon chains, while a peripheral stalk is formed by the delta and b chains.</text>
</comment>
<comment type="subcellular location">
    <subcellularLocation>
        <location evidence="1">Cell inner membrane</location>
        <topology evidence="1">Single-pass membrane protein</topology>
    </subcellularLocation>
</comment>
<comment type="similarity">
    <text evidence="1">Belongs to the ATPase B chain family.</text>
</comment>
<name>ATPF_NITEU</name>
<reference key="1">
    <citation type="journal article" date="2003" name="J. Bacteriol.">
        <title>Complete genome sequence of the ammonia-oxidizing bacterium and obligate chemolithoautotroph Nitrosomonas europaea.</title>
        <authorList>
            <person name="Chain P."/>
            <person name="Lamerdin J.E."/>
            <person name="Larimer F.W."/>
            <person name="Regala W."/>
            <person name="Lao V."/>
            <person name="Land M.L."/>
            <person name="Hauser L."/>
            <person name="Hooper A.B."/>
            <person name="Klotz M.G."/>
            <person name="Norton J."/>
            <person name="Sayavedra-Soto L.A."/>
            <person name="Arciero D.M."/>
            <person name="Hommes N.G."/>
            <person name="Whittaker M.M."/>
            <person name="Arp D.J."/>
        </authorList>
    </citation>
    <scope>NUCLEOTIDE SEQUENCE [LARGE SCALE GENOMIC DNA]</scope>
    <source>
        <strain>ATCC 19718 / CIP 103999 / KCTC 2705 / NBRC 14298</strain>
    </source>
</reference>
<dbReference type="EMBL" id="AL954747">
    <property type="protein sequence ID" value="CAD84113.1"/>
    <property type="molecule type" value="Genomic_DNA"/>
</dbReference>
<dbReference type="RefSeq" id="WP_011110847.1">
    <property type="nucleotide sequence ID" value="NC_004757.1"/>
</dbReference>
<dbReference type="SMR" id="Q82XQ2"/>
<dbReference type="STRING" id="228410.NE0202"/>
<dbReference type="GeneID" id="87103409"/>
<dbReference type="KEGG" id="neu:NE0202"/>
<dbReference type="eggNOG" id="COG0711">
    <property type="taxonomic scope" value="Bacteria"/>
</dbReference>
<dbReference type="HOGENOM" id="CLU_079215_4_5_4"/>
<dbReference type="OrthoDB" id="9788020at2"/>
<dbReference type="PhylomeDB" id="Q82XQ2"/>
<dbReference type="Proteomes" id="UP000001416">
    <property type="component" value="Chromosome"/>
</dbReference>
<dbReference type="GO" id="GO:0005886">
    <property type="term" value="C:plasma membrane"/>
    <property type="evidence" value="ECO:0007669"/>
    <property type="project" value="UniProtKB-SubCell"/>
</dbReference>
<dbReference type="GO" id="GO:0045259">
    <property type="term" value="C:proton-transporting ATP synthase complex"/>
    <property type="evidence" value="ECO:0007669"/>
    <property type="project" value="UniProtKB-KW"/>
</dbReference>
<dbReference type="GO" id="GO:0046933">
    <property type="term" value="F:proton-transporting ATP synthase activity, rotational mechanism"/>
    <property type="evidence" value="ECO:0007669"/>
    <property type="project" value="UniProtKB-UniRule"/>
</dbReference>
<dbReference type="GO" id="GO:0046961">
    <property type="term" value="F:proton-transporting ATPase activity, rotational mechanism"/>
    <property type="evidence" value="ECO:0007669"/>
    <property type="project" value="TreeGrafter"/>
</dbReference>
<dbReference type="CDD" id="cd06503">
    <property type="entry name" value="ATP-synt_Fo_b"/>
    <property type="match status" value="1"/>
</dbReference>
<dbReference type="Gene3D" id="6.10.250.1580">
    <property type="match status" value="1"/>
</dbReference>
<dbReference type="HAMAP" id="MF_01398">
    <property type="entry name" value="ATP_synth_b_bprime"/>
    <property type="match status" value="1"/>
</dbReference>
<dbReference type="InterPro" id="IPR028987">
    <property type="entry name" value="ATP_synth_B-like_membr_sf"/>
</dbReference>
<dbReference type="InterPro" id="IPR002146">
    <property type="entry name" value="ATP_synth_b/b'su_bac/chlpt"/>
</dbReference>
<dbReference type="InterPro" id="IPR005864">
    <property type="entry name" value="ATP_synth_F0_bsu_bac"/>
</dbReference>
<dbReference type="InterPro" id="IPR050059">
    <property type="entry name" value="ATP_synthase_B_chain"/>
</dbReference>
<dbReference type="NCBIfam" id="TIGR01144">
    <property type="entry name" value="ATP_synt_b"/>
    <property type="match status" value="1"/>
</dbReference>
<dbReference type="NCBIfam" id="NF004411">
    <property type="entry name" value="PRK05759.1-2"/>
    <property type="match status" value="1"/>
</dbReference>
<dbReference type="PANTHER" id="PTHR33445:SF1">
    <property type="entry name" value="ATP SYNTHASE SUBUNIT B"/>
    <property type="match status" value="1"/>
</dbReference>
<dbReference type="PANTHER" id="PTHR33445">
    <property type="entry name" value="ATP SYNTHASE SUBUNIT B', CHLOROPLASTIC"/>
    <property type="match status" value="1"/>
</dbReference>
<dbReference type="Pfam" id="PF00430">
    <property type="entry name" value="ATP-synt_B"/>
    <property type="match status" value="1"/>
</dbReference>
<dbReference type="SUPFAM" id="SSF81573">
    <property type="entry name" value="F1F0 ATP synthase subunit B, membrane domain"/>
    <property type="match status" value="1"/>
</dbReference>
<keyword id="KW-0066">ATP synthesis</keyword>
<keyword id="KW-0997">Cell inner membrane</keyword>
<keyword id="KW-1003">Cell membrane</keyword>
<keyword id="KW-0138">CF(0)</keyword>
<keyword id="KW-0375">Hydrogen ion transport</keyword>
<keyword id="KW-0406">Ion transport</keyword>
<keyword id="KW-0472">Membrane</keyword>
<keyword id="KW-1185">Reference proteome</keyword>
<keyword id="KW-0812">Transmembrane</keyword>
<keyword id="KW-1133">Transmembrane helix</keyword>
<keyword id="KW-0813">Transport</keyword>
<organism>
    <name type="scientific">Nitrosomonas europaea (strain ATCC 19718 / CIP 103999 / KCTC 2705 / NBRC 14298)</name>
    <dbReference type="NCBI Taxonomy" id="228410"/>
    <lineage>
        <taxon>Bacteria</taxon>
        <taxon>Pseudomonadati</taxon>
        <taxon>Pseudomonadota</taxon>
        <taxon>Betaproteobacteria</taxon>
        <taxon>Nitrosomonadales</taxon>
        <taxon>Nitrosomonadaceae</taxon>
        <taxon>Nitrosomonas</taxon>
    </lineage>
</organism>
<proteinExistence type="inferred from homology"/>
<gene>
    <name evidence="1" type="primary">atpF</name>
    <name type="ordered locus">NE0202</name>
</gene>
<protein>
    <recommendedName>
        <fullName evidence="1">ATP synthase subunit b</fullName>
    </recommendedName>
    <alternativeName>
        <fullName evidence="1">ATP synthase F(0) sector subunit b</fullName>
    </alternativeName>
    <alternativeName>
        <fullName evidence="1">ATPase subunit I</fullName>
    </alternativeName>
    <alternativeName>
        <fullName evidence="1">F-type ATPase subunit b</fullName>
        <shortName evidence="1">F-ATPase subunit b</shortName>
    </alternativeName>
</protein>